<gene>
    <name type="primary">Sult1e1</name>
    <name evidence="7" type="synonym">Est</name>
    <name type="synonym">Ste</name>
</gene>
<proteinExistence type="evidence at protein level"/>
<comment type="function">
    <text evidence="2 6">Sulfotransferase that utilizes 3'-phospho-5'-adenylyl sulfate (PAPS) as sulfonate donor to catalyze the sulfate conjugation of estradiol and estrone (By similarity) (PubMed:9765259). Is a key enzyme in estrogen homeostasis, the sulfation of estrogens leads to their inactivation. Also sulfates dehydroepiandrosterone, pregnenolone, (24S)-hydroxycholesterol and xenobiotic compounds like ethinylestradiol, equalenin, diethyl stilbesterol and 1-naphthol at significantly lower efficiency. Does not sulfonate cortisol, testosterone and dopamine (By similarity). May play a role in gut microbiota-host metabolic interaction. O-sulfonates 4-ethylphenol (4-EP), a dietary tyrosine-derived metabolite produced by gut bacteria. The product 4-EPS crosses the blood-brain barrier and may negatively regulate oligodendrocyte maturation and myelination, affecting the functional connectivity of different brain regions associated with the limbic system.</text>
</comment>
<comment type="catalytic activity">
    <reaction evidence="2">
        <text>estrone + 3'-phosphoadenylyl sulfate = estrone 3-sulfate + adenosine 3',5'-bisphosphate + H(+)</text>
        <dbReference type="Rhea" id="RHEA:15973"/>
        <dbReference type="ChEBI" id="CHEBI:15378"/>
        <dbReference type="ChEBI" id="CHEBI:17263"/>
        <dbReference type="ChEBI" id="CHEBI:58339"/>
        <dbReference type="ChEBI" id="CHEBI:58343"/>
        <dbReference type="ChEBI" id="CHEBI:60050"/>
        <dbReference type="EC" id="2.8.2.4"/>
    </reaction>
    <physiologicalReaction direction="left-to-right" evidence="2">
        <dbReference type="Rhea" id="RHEA:15974"/>
    </physiologicalReaction>
</comment>
<comment type="catalytic activity">
    <reaction evidence="6">
        <text>17beta-estradiol + 3'-phosphoadenylyl sulfate = 17beta-estradiol 3-sulfate + adenosine 3',5'-bisphosphate + H(+)</text>
        <dbReference type="Rhea" id="RHEA:52372"/>
        <dbReference type="ChEBI" id="CHEBI:15378"/>
        <dbReference type="ChEBI" id="CHEBI:16469"/>
        <dbReference type="ChEBI" id="CHEBI:58339"/>
        <dbReference type="ChEBI" id="CHEBI:58343"/>
        <dbReference type="ChEBI" id="CHEBI:136582"/>
    </reaction>
    <physiologicalReaction direction="left-to-right" evidence="9">
        <dbReference type="Rhea" id="RHEA:52373"/>
    </physiologicalReaction>
</comment>
<comment type="catalytic activity">
    <reaction evidence="2">
        <text>(24S)-hydroxycholesterol + 3'-phosphoadenylyl sulfate = (24S)-hydroxycholesterol 3-sulfate + adenosine 3',5'-bisphosphate + H(+)</text>
        <dbReference type="Rhea" id="RHEA:52348"/>
        <dbReference type="ChEBI" id="CHEBI:15378"/>
        <dbReference type="ChEBI" id="CHEBI:34310"/>
        <dbReference type="ChEBI" id="CHEBI:58339"/>
        <dbReference type="ChEBI" id="CHEBI:58343"/>
        <dbReference type="ChEBI" id="CHEBI:136567"/>
    </reaction>
    <physiologicalReaction direction="left-to-right" evidence="2">
        <dbReference type="Rhea" id="RHEA:52349"/>
    </physiologicalReaction>
</comment>
<comment type="catalytic activity">
    <reaction evidence="2">
        <text>3beta-hydroxyandrost-5-en-17-one + 3'-phosphoadenylyl sulfate = dehydroepiandrosterone 3-sulfate + adenosine 3',5'-bisphosphate + H(+)</text>
        <dbReference type="Rhea" id="RHEA:51216"/>
        <dbReference type="ChEBI" id="CHEBI:15378"/>
        <dbReference type="ChEBI" id="CHEBI:28689"/>
        <dbReference type="ChEBI" id="CHEBI:57905"/>
        <dbReference type="ChEBI" id="CHEBI:58339"/>
        <dbReference type="ChEBI" id="CHEBI:58343"/>
    </reaction>
</comment>
<comment type="catalytic activity">
    <reaction evidence="2">
        <text>4-ethylphenol + 3'-phosphoadenylyl sulfate = 4-ethylphenyl sulfate + adenosine 3',5'-bisphosphate + H(+)</text>
        <dbReference type="Rhea" id="RHEA:70607"/>
        <dbReference type="ChEBI" id="CHEBI:15378"/>
        <dbReference type="ChEBI" id="CHEBI:49584"/>
        <dbReference type="ChEBI" id="CHEBI:58339"/>
        <dbReference type="ChEBI" id="CHEBI:58343"/>
        <dbReference type="ChEBI" id="CHEBI:133681"/>
    </reaction>
    <physiologicalReaction direction="left-to-right" evidence="2">
        <dbReference type="Rhea" id="RHEA:70608"/>
    </physiologicalReaction>
</comment>
<comment type="activity regulation">
    <text evidence="2">Inhibited by estradiol.</text>
</comment>
<comment type="biophysicochemical properties">
    <kinetics>
        <KM evidence="6">0.3 uM for PAPS</KM>
        <KM evidence="6">17.5 nM for estradiol</KM>
        <text evidence="6">kcat is 23.5 sec(-1) with estradiol as substrate.</text>
    </kinetics>
</comment>
<comment type="subunit">
    <text evidence="2">Homodimer.</text>
</comment>
<comment type="subcellular location">
    <subcellularLocation>
        <location evidence="1">Cytoplasm</location>
        <location evidence="1">Cytosol</location>
    </subcellularLocation>
</comment>
<comment type="tissue specificity">
    <text>Testis and at very low level in the placenta.</text>
</comment>
<comment type="miscellaneous">
    <text evidence="4">Abnormal high expression in liver in obese and diabetogenic C57BL/KSJ-DB/DB strain mice. Female &gt; male. Normal level in liver.</text>
</comment>
<comment type="similarity">
    <text evidence="8">Belongs to the sulfotransferase 1 family.</text>
</comment>
<dbReference type="EC" id="2.8.2.4" evidence="6"/>
<dbReference type="EMBL" id="S78182">
    <property type="protein sequence ID" value="AAB34320.1"/>
    <property type="molecule type" value="mRNA"/>
</dbReference>
<dbReference type="CCDS" id="CCDS19392.1"/>
<dbReference type="PIR" id="I53296">
    <property type="entry name" value="I53296"/>
</dbReference>
<dbReference type="PDB" id="1AQU">
    <property type="method" value="X-ray"/>
    <property type="resolution" value="1.60 A"/>
    <property type="chains" value="A/B=1-295"/>
</dbReference>
<dbReference type="PDB" id="1AQY">
    <property type="method" value="X-ray"/>
    <property type="resolution" value="1.75 A"/>
    <property type="chains" value="A/B=1-295"/>
</dbReference>
<dbReference type="PDB" id="1BO6">
    <property type="method" value="X-ray"/>
    <property type="resolution" value="2.10 A"/>
    <property type="chains" value="A/B=1-295"/>
</dbReference>
<dbReference type="PDBsum" id="1AQU"/>
<dbReference type="PDBsum" id="1AQY"/>
<dbReference type="PDBsum" id="1BO6"/>
<dbReference type="SMR" id="P49891"/>
<dbReference type="FunCoup" id="P49891">
    <property type="interactions" value="276"/>
</dbReference>
<dbReference type="IntAct" id="P49891">
    <property type="interactions" value="1"/>
</dbReference>
<dbReference type="STRING" id="10090.ENSMUSP00000031201"/>
<dbReference type="BindingDB" id="P49891"/>
<dbReference type="ChEMBL" id="CHEMBL3052"/>
<dbReference type="iPTMnet" id="P49891"/>
<dbReference type="PhosphoSitePlus" id="P49891"/>
<dbReference type="SwissPalm" id="P49891"/>
<dbReference type="PaxDb" id="10090-ENSMUSP00000031201"/>
<dbReference type="ProteomicsDB" id="257083"/>
<dbReference type="AGR" id="MGI:98431"/>
<dbReference type="MGI" id="MGI:98431">
    <property type="gene designation" value="Sult1e1"/>
</dbReference>
<dbReference type="eggNOG" id="KOG1584">
    <property type="taxonomic scope" value="Eukaryota"/>
</dbReference>
<dbReference type="InParanoid" id="P49891"/>
<dbReference type="OrthoDB" id="205623at2759"/>
<dbReference type="PhylomeDB" id="P49891"/>
<dbReference type="BRENDA" id="2.8.2.4">
    <property type="organism ID" value="3474"/>
</dbReference>
<dbReference type="Reactome" id="R-MMU-156584">
    <property type="pathway name" value="Cytosolic sulfonation of small molecules"/>
</dbReference>
<dbReference type="Reactome" id="R-MMU-9753281">
    <property type="pathway name" value="Paracetamol ADME"/>
</dbReference>
<dbReference type="SABIO-RK" id="P49891"/>
<dbReference type="ChiTaRS" id="Map7">
    <property type="organism name" value="mouse"/>
</dbReference>
<dbReference type="EvolutionaryTrace" id="P49891"/>
<dbReference type="PRO" id="PR:P49891"/>
<dbReference type="Proteomes" id="UP000000589">
    <property type="component" value="Unplaced"/>
</dbReference>
<dbReference type="RNAct" id="P49891">
    <property type="molecule type" value="protein"/>
</dbReference>
<dbReference type="GO" id="GO:0005737">
    <property type="term" value="C:cytoplasm"/>
    <property type="evidence" value="ECO:0000314"/>
    <property type="project" value="MGI"/>
</dbReference>
<dbReference type="GO" id="GO:0005829">
    <property type="term" value="C:cytosol"/>
    <property type="evidence" value="ECO:0000250"/>
    <property type="project" value="UniProtKB"/>
</dbReference>
<dbReference type="GO" id="GO:0004304">
    <property type="term" value="F:estrone sulfotransferase activity"/>
    <property type="evidence" value="ECO:0007669"/>
    <property type="project" value="UniProtKB-EC"/>
</dbReference>
<dbReference type="GO" id="GO:0005496">
    <property type="term" value="F:steroid binding"/>
    <property type="evidence" value="ECO:0007669"/>
    <property type="project" value="UniProtKB-KW"/>
</dbReference>
<dbReference type="GO" id="GO:0050294">
    <property type="term" value="F:steroid sulfotransferase activity"/>
    <property type="evidence" value="ECO:0000314"/>
    <property type="project" value="UniProtKB"/>
</dbReference>
<dbReference type="GO" id="GO:0008146">
    <property type="term" value="F:sulfotransferase activity"/>
    <property type="evidence" value="ECO:0000266"/>
    <property type="project" value="MGI"/>
</dbReference>
<dbReference type="GO" id="GO:0008210">
    <property type="term" value="P:estrogen metabolic process"/>
    <property type="evidence" value="ECO:0000314"/>
    <property type="project" value="UniProtKB"/>
</dbReference>
<dbReference type="GO" id="GO:0007565">
    <property type="term" value="P:female pregnancy"/>
    <property type="evidence" value="ECO:0000315"/>
    <property type="project" value="MGI"/>
</dbReference>
<dbReference type="GO" id="GO:0051923">
    <property type="term" value="P:sulfation"/>
    <property type="evidence" value="ECO:0000266"/>
    <property type="project" value="MGI"/>
</dbReference>
<dbReference type="FunFam" id="3.40.50.300:FF:000433">
    <property type="entry name" value="Estrogen sulfotransferase"/>
    <property type="match status" value="1"/>
</dbReference>
<dbReference type="Gene3D" id="3.40.50.300">
    <property type="entry name" value="P-loop containing nucleotide triphosphate hydrolases"/>
    <property type="match status" value="1"/>
</dbReference>
<dbReference type="InterPro" id="IPR027417">
    <property type="entry name" value="P-loop_NTPase"/>
</dbReference>
<dbReference type="InterPro" id="IPR000863">
    <property type="entry name" value="Sulfotransferase_dom"/>
</dbReference>
<dbReference type="PANTHER" id="PTHR11783">
    <property type="entry name" value="SULFOTRANSFERASE SULT"/>
    <property type="match status" value="1"/>
</dbReference>
<dbReference type="Pfam" id="PF00685">
    <property type="entry name" value="Sulfotransfer_1"/>
    <property type="match status" value="1"/>
</dbReference>
<dbReference type="SUPFAM" id="SSF52540">
    <property type="entry name" value="P-loop containing nucleoside triphosphate hydrolases"/>
    <property type="match status" value="1"/>
</dbReference>
<name>ST1E1_MOUSE</name>
<keyword id="KW-0002">3D-structure</keyword>
<keyword id="KW-0963">Cytoplasm</keyword>
<keyword id="KW-0443">Lipid metabolism</keyword>
<keyword id="KW-0446">Lipid-binding</keyword>
<keyword id="KW-0597">Phosphoprotein</keyword>
<keyword id="KW-1185">Reference proteome</keyword>
<keyword id="KW-0754">Steroid-binding</keyword>
<keyword id="KW-0808">Transferase</keyword>
<evidence type="ECO:0000250" key="1">
    <source>
        <dbReference type="UniProtKB" id="P49887"/>
    </source>
</evidence>
<evidence type="ECO:0000250" key="2">
    <source>
        <dbReference type="UniProtKB" id="P49888"/>
    </source>
</evidence>
<evidence type="ECO:0000250" key="3">
    <source>
        <dbReference type="UniProtKB" id="P52844"/>
    </source>
</evidence>
<evidence type="ECO:0000269" key="4">
    <source>
    </source>
</evidence>
<evidence type="ECO:0000269" key="5">
    <source>
    </source>
</evidence>
<evidence type="ECO:0000269" key="6">
    <source>
    </source>
</evidence>
<evidence type="ECO:0000303" key="7">
    <source>
    </source>
</evidence>
<evidence type="ECO:0000305" key="8"/>
<evidence type="ECO:0000305" key="9">
    <source>
    </source>
</evidence>
<evidence type="ECO:0007744" key="10">
    <source>
        <dbReference type="PDB" id="1AQU"/>
    </source>
</evidence>
<evidence type="ECO:0007744" key="11">
    <source>
        <dbReference type="PDB" id="1AQY"/>
    </source>
</evidence>
<evidence type="ECO:0007744" key="12">
    <source>
        <dbReference type="PDB" id="1BO6"/>
    </source>
</evidence>
<evidence type="ECO:0007829" key="13">
    <source>
        <dbReference type="PDB" id="1AQU"/>
    </source>
</evidence>
<evidence type="ECO:0007829" key="14">
    <source>
        <dbReference type="PDB" id="1AQY"/>
    </source>
</evidence>
<feature type="chain" id="PRO_0000085154" description="Sulfotransferase 1E1">
    <location>
        <begin position="1"/>
        <end position="295"/>
    </location>
</feature>
<feature type="active site" description="Proton acceptor" evidence="6">
    <location>
        <position position="108"/>
    </location>
</feature>
<feature type="binding site" evidence="5 6 10 11 12">
    <location>
        <begin position="48"/>
        <end position="53"/>
    </location>
    <ligand>
        <name>3'-phosphoadenylyl sulfate</name>
        <dbReference type="ChEBI" id="CHEBI:58339"/>
    </ligand>
</feature>
<feature type="binding site" evidence="5 10">
    <location>
        <begin position="106"/>
        <end position="108"/>
    </location>
    <ligand>
        <name>substrate</name>
    </ligand>
</feature>
<feature type="binding site" evidence="5 6 10 11 12">
    <location>
        <position position="130"/>
    </location>
    <ligand>
        <name>3'-phosphoadenylyl sulfate</name>
        <dbReference type="ChEBI" id="CHEBI:58339"/>
    </ligand>
</feature>
<feature type="binding site" evidence="5 6 10 11 12">
    <location>
        <position position="138"/>
    </location>
    <ligand>
        <name>3'-phosphoadenylyl sulfate</name>
        <dbReference type="ChEBI" id="CHEBI:58339"/>
    </ligand>
</feature>
<feature type="binding site" evidence="5 6 10 11 12">
    <location>
        <position position="193"/>
    </location>
    <ligand>
        <name>3'-phosphoadenylyl sulfate</name>
        <dbReference type="ChEBI" id="CHEBI:58339"/>
    </ligand>
</feature>
<feature type="binding site" evidence="5 6 10 11 12">
    <location>
        <begin position="227"/>
        <end position="232"/>
    </location>
    <ligand>
        <name>3'-phosphoadenylyl sulfate</name>
        <dbReference type="ChEBI" id="CHEBI:58339"/>
    </ligand>
</feature>
<feature type="binding site" evidence="5 6 10 11 12">
    <location>
        <begin position="257"/>
        <end position="259"/>
    </location>
    <ligand>
        <name>3'-phosphoadenylyl sulfate</name>
        <dbReference type="ChEBI" id="CHEBI:58339"/>
    </ligand>
</feature>
<feature type="modified residue" description="Phosphoserine" evidence="3">
    <location>
        <position position="156"/>
    </location>
</feature>
<feature type="mutagenesis site" description="Loss of estrogen sulfotransferase activity." evidence="6">
    <original>K</original>
    <variation>M</variation>
    <location>
        <position position="48"/>
    </location>
</feature>
<feature type="mutagenesis site" description="Reduced estrogen sulfotransferase activity." evidence="6">
    <original>K</original>
    <variation>R</variation>
    <location>
        <position position="48"/>
    </location>
</feature>
<feature type="mutagenesis site" description="Strongly reduced estrogen sulfotransferase activity. Strongly reduced affinity for estradiol." evidence="6">
    <original>K</original>
    <variation>A</variation>
    <location>
        <position position="106"/>
    </location>
</feature>
<feature type="mutagenesis site" description="Strongly reduced estrogen sulfotransferase activity. Strongly reduced affinity for estradiol." evidence="6">
    <original>K</original>
    <variation>R</variation>
    <variation>S</variation>
    <location>
        <position position="106"/>
    </location>
</feature>
<feature type="mutagenesis site" description="Loss of estrogen sulfotransferase activity." evidence="6">
    <original>H</original>
    <variation>K</variation>
    <variation>L</variation>
    <variation>S</variation>
    <variation>R</variation>
    <location>
        <position position="108"/>
    </location>
</feature>
<feature type="mutagenesis site" description="Slightly decreased estrogen sulfotransferase activity." evidence="6">
    <original>Y</original>
    <variation>F</variation>
    <location>
        <position position="240"/>
    </location>
</feature>
<feature type="sequence conflict" description="In Ref. 1; AAB34320." evidence="8" ref="1">
    <original>L</original>
    <variation>V</variation>
    <location>
        <position position="113"/>
    </location>
</feature>
<feature type="helix" evidence="13">
    <location>
        <begin position="8"/>
        <end position="11"/>
    </location>
</feature>
<feature type="strand" evidence="13">
    <location>
        <begin position="12"/>
        <end position="15"/>
    </location>
</feature>
<feature type="strand" evidence="13">
    <location>
        <begin position="18"/>
        <end position="21"/>
    </location>
</feature>
<feature type="helix" evidence="13">
    <location>
        <begin position="22"/>
        <end position="24"/>
    </location>
</feature>
<feature type="turn" evidence="13">
    <location>
        <begin position="25"/>
        <end position="27"/>
    </location>
</feature>
<feature type="helix" evidence="13">
    <location>
        <begin position="28"/>
        <end position="32"/>
    </location>
</feature>
<feature type="strand" evidence="13">
    <location>
        <begin position="41"/>
        <end position="45"/>
    </location>
</feature>
<feature type="helix" evidence="13">
    <location>
        <begin position="51"/>
        <end position="62"/>
    </location>
</feature>
<feature type="turn" evidence="14">
    <location>
        <begin position="63"/>
        <end position="65"/>
    </location>
</feature>
<feature type="helix" evidence="13">
    <location>
        <begin position="75"/>
        <end position="78"/>
    </location>
</feature>
<feature type="turn" evidence="13">
    <location>
        <begin position="87"/>
        <end position="89"/>
    </location>
</feature>
<feature type="helix" evidence="13">
    <location>
        <begin position="92"/>
        <end position="97"/>
    </location>
</feature>
<feature type="strand" evidence="13">
    <location>
        <begin position="104"/>
        <end position="107"/>
    </location>
</feature>
<feature type="helix" evidence="13">
    <location>
        <begin position="111"/>
        <end position="113"/>
    </location>
</feature>
<feature type="helix" evidence="13">
    <location>
        <begin position="116"/>
        <end position="120"/>
    </location>
</feature>
<feature type="strand" evidence="13">
    <location>
        <begin position="124"/>
        <end position="129"/>
    </location>
</feature>
<feature type="helix" evidence="13">
    <location>
        <begin position="132"/>
        <end position="145"/>
    </location>
</feature>
<feature type="helix" evidence="13">
    <location>
        <begin position="155"/>
        <end position="164"/>
    </location>
</feature>
<feature type="helix" evidence="13">
    <location>
        <begin position="172"/>
        <end position="182"/>
    </location>
</feature>
<feature type="strand" evidence="13">
    <location>
        <begin position="188"/>
        <end position="192"/>
    </location>
</feature>
<feature type="helix" evidence="13">
    <location>
        <begin position="193"/>
        <end position="198"/>
    </location>
</feature>
<feature type="helix" evidence="13">
    <location>
        <begin position="200"/>
        <end position="210"/>
    </location>
</feature>
<feature type="helix" evidence="13">
    <location>
        <begin position="217"/>
        <end position="226"/>
    </location>
</feature>
<feature type="helix" evidence="13">
    <location>
        <begin position="229"/>
        <end position="234"/>
    </location>
</feature>
<feature type="turn" evidence="13">
    <location>
        <begin position="236"/>
        <end position="242"/>
    </location>
</feature>
<feature type="turn" evidence="13">
    <location>
        <begin position="245"/>
        <end position="247"/>
    </location>
</feature>
<feature type="turn" evidence="13">
    <location>
        <begin position="250"/>
        <end position="252"/>
    </location>
</feature>
<feature type="helix" evidence="13">
    <location>
        <begin position="263"/>
        <end position="266"/>
    </location>
</feature>
<feature type="helix" evidence="13">
    <location>
        <begin position="270"/>
        <end position="284"/>
    </location>
</feature>
<accession>P49891</accession>
<reference key="1">
    <citation type="journal article" date="1995" name="Endocrinology">
        <title>Molecular characterization of a testis-specific estrogen sulfotransferase and aberrant liver expression in obese and diabetogenic C57BL/KsJ-db/db mice.</title>
        <authorList>
            <person name="Song W.-C."/>
            <person name="Moore R."/>
            <person name="McLachlan J.A."/>
            <person name="Negishi M."/>
        </authorList>
    </citation>
    <scope>NUCLEOTIDE SEQUENCE [MRNA]</scope>
    <source>
        <strain>C57BL/KSJ-DB/DB</strain>
        <tissue>Testis</tissue>
    </source>
</reference>
<reference key="2">
    <citation type="journal article" date="1997" name="Nat. Struct. Biol.">
        <title>Crystal structure of estrogen sulfotransferase.</title>
        <authorList>
            <person name="Kakuta Y."/>
            <person name="Pedersen L.G."/>
            <person name="Carter C.W."/>
            <person name="Negishi M."/>
            <person name="Pedersen L.C."/>
        </authorList>
    </citation>
    <scope>X-RAY CRYSTALLOGRAPHY (1.6 ANGSTROMS) IN COMPLEX WITH ADENOSINE 3',5'-BISPHOSPHATE (PAP) AND 17-BETA-ESTRADIOL</scope>
    <scope>SEQUENCE REVISION TO 113</scope>
    <source>
        <strain>C57BL/KSJ-DB/DB</strain>
        <tissue>Testis</tissue>
    </source>
</reference>
<reference key="3">
    <citation type="journal article" date="1998" name="J. Biol. Chem.">
        <title>The sulfuryl transfer mechanism. Crystal structure of a vanadate complex of estrogen sulfotransferase and mutational analysis.</title>
        <authorList>
            <person name="Kakuta Y."/>
            <person name="Petrotchenko E.V."/>
            <person name="Pedersen L.C."/>
            <person name="Negishi M."/>
        </authorList>
    </citation>
    <scope>X-RAY CRYSTALLOGRAPHY (2.1 ANGSTROMS) IN COMPLEX WITH ADENOSINE 3',5'BISPHOSPHATE AND VANADATE</scope>
    <scope>CATALYTIC ACTIVITY</scope>
    <scope>FUNCTION</scope>
    <scope>ACTIVE SITE</scope>
    <scope>MUTAGENESIS OF LYS-48; LYS-106; HIS-108 AND TYR-240</scope>
    <scope>BIOPHYSICOCHEMICAL PROPERTIES</scope>
</reference>
<sequence length="295" mass="35590">METSMPEYYEVFGEFRGVLMDKRFTKYWEDVEMFLARPDDLVIATYPKSGTTWISEVVYMIYKEGDVEKCKEDAIFNRIPYLECRNEDLINGIKQLKEKESPRIVKTHLPPKLLPASFWEKNCKMIYLCRNAKDVAVSYYYFLLMITSYPNPKSFSEFVEKFMQGQVPYGSWYDHVKAWWEKSKNSRVLFMFYEDMKEDIRREVVKLIEFLERKPSAELVDRIIQHTSFQEMKNNPSTNYTMMPEEMMNQKVSPFMRKGIIGDWKNHFPEALRERFDEHYKQQMKDCTVKFRMEL</sequence>
<organism>
    <name type="scientific">Mus musculus</name>
    <name type="common">Mouse</name>
    <dbReference type="NCBI Taxonomy" id="10090"/>
    <lineage>
        <taxon>Eukaryota</taxon>
        <taxon>Metazoa</taxon>
        <taxon>Chordata</taxon>
        <taxon>Craniata</taxon>
        <taxon>Vertebrata</taxon>
        <taxon>Euteleostomi</taxon>
        <taxon>Mammalia</taxon>
        <taxon>Eutheria</taxon>
        <taxon>Euarchontoglires</taxon>
        <taxon>Glires</taxon>
        <taxon>Rodentia</taxon>
        <taxon>Myomorpha</taxon>
        <taxon>Muroidea</taxon>
        <taxon>Muridae</taxon>
        <taxon>Murinae</taxon>
        <taxon>Mus</taxon>
        <taxon>Mus</taxon>
    </lineage>
</organism>
<protein>
    <recommendedName>
        <fullName>Sulfotransferase 1E1</fullName>
        <shortName>ST1E1</shortName>
        <ecNumber evidence="6">2.8.2.4</ecNumber>
    </recommendedName>
    <alternativeName>
        <fullName>Estrogen sulfotransferase, testis isoform</fullName>
    </alternativeName>
    <alternativeName>
        <fullName>Sulfotransferase, estrogen-preferring</fullName>
    </alternativeName>
</protein>